<reference evidence="9" key="1">
    <citation type="journal article" date="2000" name="Science">
        <title>The genome sequence of Drosophila melanogaster.</title>
        <authorList>
            <person name="Adams M.D."/>
            <person name="Celniker S.E."/>
            <person name="Holt R.A."/>
            <person name="Evans C.A."/>
            <person name="Gocayne J.D."/>
            <person name="Amanatides P.G."/>
            <person name="Scherer S.E."/>
            <person name="Li P.W."/>
            <person name="Hoskins R.A."/>
            <person name="Galle R.F."/>
            <person name="George R.A."/>
            <person name="Lewis S.E."/>
            <person name="Richards S."/>
            <person name="Ashburner M."/>
            <person name="Henderson S.N."/>
            <person name="Sutton G.G."/>
            <person name="Wortman J.R."/>
            <person name="Yandell M.D."/>
            <person name="Zhang Q."/>
            <person name="Chen L.X."/>
            <person name="Brandon R.C."/>
            <person name="Rogers Y.-H.C."/>
            <person name="Blazej R.G."/>
            <person name="Champe M."/>
            <person name="Pfeiffer B.D."/>
            <person name="Wan K.H."/>
            <person name="Doyle C."/>
            <person name="Baxter E.G."/>
            <person name="Helt G."/>
            <person name="Nelson C.R."/>
            <person name="Miklos G.L.G."/>
            <person name="Abril J.F."/>
            <person name="Agbayani A."/>
            <person name="An H.-J."/>
            <person name="Andrews-Pfannkoch C."/>
            <person name="Baldwin D."/>
            <person name="Ballew R.M."/>
            <person name="Basu A."/>
            <person name="Baxendale J."/>
            <person name="Bayraktaroglu L."/>
            <person name="Beasley E.M."/>
            <person name="Beeson K.Y."/>
            <person name="Benos P.V."/>
            <person name="Berman B.P."/>
            <person name="Bhandari D."/>
            <person name="Bolshakov S."/>
            <person name="Borkova D."/>
            <person name="Botchan M.R."/>
            <person name="Bouck J."/>
            <person name="Brokstein P."/>
            <person name="Brottier P."/>
            <person name="Burtis K.C."/>
            <person name="Busam D.A."/>
            <person name="Butler H."/>
            <person name="Cadieu E."/>
            <person name="Center A."/>
            <person name="Chandra I."/>
            <person name="Cherry J.M."/>
            <person name="Cawley S."/>
            <person name="Dahlke C."/>
            <person name="Davenport L.B."/>
            <person name="Davies P."/>
            <person name="de Pablos B."/>
            <person name="Delcher A."/>
            <person name="Deng Z."/>
            <person name="Mays A.D."/>
            <person name="Dew I."/>
            <person name="Dietz S.M."/>
            <person name="Dodson K."/>
            <person name="Doup L.E."/>
            <person name="Downes M."/>
            <person name="Dugan-Rocha S."/>
            <person name="Dunkov B.C."/>
            <person name="Dunn P."/>
            <person name="Durbin K.J."/>
            <person name="Evangelista C.C."/>
            <person name="Ferraz C."/>
            <person name="Ferriera S."/>
            <person name="Fleischmann W."/>
            <person name="Fosler C."/>
            <person name="Gabrielian A.E."/>
            <person name="Garg N.S."/>
            <person name="Gelbart W.M."/>
            <person name="Glasser K."/>
            <person name="Glodek A."/>
            <person name="Gong F."/>
            <person name="Gorrell J.H."/>
            <person name="Gu Z."/>
            <person name="Guan P."/>
            <person name="Harris M."/>
            <person name="Harris N.L."/>
            <person name="Harvey D.A."/>
            <person name="Heiman T.J."/>
            <person name="Hernandez J.R."/>
            <person name="Houck J."/>
            <person name="Hostin D."/>
            <person name="Houston K.A."/>
            <person name="Howland T.J."/>
            <person name="Wei M.-H."/>
            <person name="Ibegwam C."/>
            <person name="Jalali M."/>
            <person name="Kalush F."/>
            <person name="Karpen G.H."/>
            <person name="Ke Z."/>
            <person name="Kennison J.A."/>
            <person name="Ketchum K.A."/>
            <person name="Kimmel B.E."/>
            <person name="Kodira C.D."/>
            <person name="Kraft C.L."/>
            <person name="Kravitz S."/>
            <person name="Kulp D."/>
            <person name="Lai Z."/>
            <person name="Lasko P."/>
            <person name="Lei Y."/>
            <person name="Levitsky A.A."/>
            <person name="Li J.H."/>
            <person name="Li Z."/>
            <person name="Liang Y."/>
            <person name="Lin X."/>
            <person name="Liu X."/>
            <person name="Mattei B."/>
            <person name="McIntosh T.C."/>
            <person name="McLeod M.P."/>
            <person name="McPherson D."/>
            <person name="Merkulov G."/>
            <person name="Milshina N.V."/>
            <person name="Mobarry C."/>
            <person name="Morris J."/>
            <person name="Moshrefi A."/>
            <person name="Mount S.M."/>
            <person name="Moy M."/>
            <person name="Murphy B."/>
            <person name="Murphy L."/>
            <person name="Muzny D.M."/>
            <person name="Nelson D.L."/>
            <person name="Nelson D.R."/>
            <person name="Nelson K.A."/>
            <person name="Nixon K."/>
            <person name="Nusskern D.R."/>
            <person name="Pacleb J.M."/>
            <person name="Palazzolo M."/>
            <person name="Pittman G.S."/>
            <person name="Pan S."/>
            <person name="Pollard J."/>
            <person name="Puri V."/>
            <person name="Reese M.G."/>
            <person name="Reinert K."/>
            <person name="Remington K."/>
            <person name="Saunders R.D.C."/>
            <person name="Scheeler F."/>
            <person name="Shen H."/>
            <person name="Shue B.C."/>
            <person name="Siden-Kiamos I."/>
            <person name="Simpson M."/>
            <person name="Skupski M.P."/>
            <person name="Smith T.J."/>
            <person name="Spier E."/>
            <person name="Spradling A.C."/>
            <person name="Stapleton M."/>
            <person name="Strong R."/>
            <person name="Sun E."/>
            <person name="Svirskas R."/>
            <person name="Tector C."/>
            <person name="Turner R."/>
            <person name="Venter E."/>
            <person name="Wang A.H."/>
            <person name="Wang X."/>
            <person name="Wang Z.-Y."/>
            <person name="Wassarman D.A."/>
            <person name="Weinstock G.M."/>
            <person name="Weissenbach J."/>
            <person name="Williams S.M."/>
            <person name="Woodage T."/>
            <person name="Worley K.C."/>
            <person name="Wu D."/>
            <person name="Yang S."/>
            <person name="Yao Q.A."/>
            <person name="Ye J."/>
            <person name="Yeh R.-F."/>
            <person name="Zaveri J.S."/>
            <person name="Zhan M."/>
            <person name="Zhang G."/>
            <person name="Zhao Q."/>
            <person name="Zheng L."/>
            <person name="Zheng X.H."/>
            <person name="Zhong F.N."/>
            <person name="Zhong W."/>
            <person name="Zhou X."/>
            <person name="Zhu S.C."/>
            <person name="Zhu X."/>
            <person name="Smith H.O."/>
            <person name="Gibbs R.A."/>
            <person name="Myers E.W."/>
            <person name="Rubin G.M."/>
            <person name="Venter J.C."/>
        </authorList>
    </citation>
    <scope>NUCLEOTIDE SEQUENCE [LARGE SCALE GENOMIC DNA]</scope>
    <source>
        <strain>Berkeley</strain>
    </source>
</reference>
<reference evidence="9" key="2">
    <citation type="journal article" date="2002" name="Genome Biol.">
        <title>Annotation of the Drosophila melanogaster euchromatic genome: a systematic review.</title>
        <authorList>
            <person name="Misra S."/>
            <person name="Crosby M.A."/>
            <person name="Mungall C.J."/>
            <person name="Matthews B.B."/>
            <person name="Campbell K.S."/>
            <person name="Hradecky P."/>
            <person name="Huang Y."/>
            <person name="Kaminker J.S."/>
            <person name="Millburn G.H."/>
            <person name="Prochnik S.E."/>
            <person name="Smith C.D."/>
            <person name="Tupy J.L."/>
            <person name="Whitfield E.J."/>
            <person name="Bayraktaroglu L."/>
            <person name="Berman B.P."/>
            <person name="Bettencourt B.R."/>
            <person name="Celniker S.E."/>
            <person name="de Grey A.D.N.J."/>
            <person name="Drysdale R.A."/>
            <person name="Harris N.L."/>
            <person name="Richter J."/>
            <person name="Russo S."/>
            <person name="Schroeder A.J."/>
            <person name="Shu S.Q."/>
            <person name="Stapleton M."/>
            <person name="Yamada C."/>
            <person name="Ashburner M."/>
            <person name="Gelbart W.M."/>
            <person name="Rubin G.M."/>
            <person name="Lewis S.E."/>
        </authorList>
    </citation>
    <scope>GENOME REANNOTATION</scope>
    <source>
        <strain>Berkeley</strain>
    </source>
</reference>
<reference evidence="7" key="3">
    <citation type="submission" date="2005-08" db="EMBL/GenBank/DDBJ databases">
        <authorList>
            <person name="Stapleton M."/>
            <person name="Carlson J."/>
            <person name="Chavez C."/>
            <person name="Frise E."/>
            <person name="George R."/>
            <person name="Pacleb J."/>
            <person name="Park S."/>
            <person name="Wan K."/>
            <person name="Yu C."/>
            <person name="Celniker S."/>
        </authorList>
    </citation>
    <scope>NUCLEOTIDE SEQUENCE [LARGE SCALE MRNA]</scope>
    <source>
        <strain evidence="7">Berkeley</strain>
    </source>
</reference>
<reference evidence="6" key="4">
    <citation type="journal article" date="2002" name="Nature">
        <title>The RNA processing exosome is linked to elongating RNA polymerase II in Drosophila.</title>
        <authorList>
            <person name="Andrulis E.D."/>
            <person name="Werner J."/>
            <person name="Nazarian A."/>
            <person name="Erdjument-Bromage H."/>
            <person name="Tempst P."/>
            <person name="Lis J.T."/>
        </authorList>
    </citation>
    <scope>IDENTIFICATION BY MASS SPECTROMETRY</scope>
    <scope>IDENTIFICATION IN THE RNA EXOSOME COMPLEX</scope>
    <scope>SUBCELLULAR LOCATION</scope>
</reference>
<reference evidence="6" key="5">
    <citation type="journal article" date="2015" name="RNA Biol.">
        <title>The 3'-5' exoribonuclease Dis3 regulates the expression of specific microRNAs in Drosophila wing imaginal discs.</title>
        <authorList>
            <person name="Towler B.P."/>
            <person name="Jones C.I."/>
            <person name="Viegas S.C."/>
            <person name="Apura P."/>
            <person name="Waldron J.A."/>
            <person name="Smalley S.K."/>
            <person name="Arraiano C.M."/>
            <person name="Newbury S.F."/>
        </authorList>
    </citation>
    <scope>DISRUPTION PHENOTYPE</scope>
</reference>
<reference evidence="6" key="6">
    <citation type="journal article" date="2020" name="PLoS Genet.">
        <title>A Drosophila model of Pontocerebellar Hypoplasia reveals a critical role for the RNA exosome in neurons.</title>
        <authorList>
            <person name="Morton D.J."/>
            <person name="Jalloh B."/>
            <person name="Kim L."/>
            <person name="Kremsky I."/>
            <person name="Nair R.J."/>
            <person name="Nguyen K.B."/>
            <person name="Rounds J.C."/>
            <person name="Sterrett M.C."/>
            <person name="Brown B."/>
            <person name="Le T."/>
            <person name="Karkare M.C."/>
            <person name="McGaughey K.D."/>
            <person name="Sheng S."/>
            <person name="Leung S.W."/>
            <person name="Fasken M.B."/>
            <person name="Moberg K.H."/>
            <person name="Corbett A.H."/>
        </authorList>
    </citation>
    <scope>FUNCTION</scope>
    <scope>DISRUPTION PHENOTYPE</scope>
    <scope>MUTAGENESIS OF GLY-11 AND ASP-87</scope>
</reference>
<gene>
    <name evidence="8" type="primary">Rrp40</name>
    <name evidence="8" type="ORF">CG31938</name>
</gene>
<accession>Q8IPX7</accession>
<name>EXOS3_DROME</name>
<dbReference type="EMBL" id="AE014134">
    <property type="protein sequence ID" value="AAN10459.1"/>
    <property type="molecule type" value="Genomic_DNA"/>
</dbReference>
<dbReference type="EMBL" id="AE014134">
    <property type="protein sequence ID" value="AHN54080.1"/>
    <property type="molecule type" value="Genomic_DNA"/>
</dbReference>
<dbReference type="EMBL" id="BT023807">
    <property type="protein sequence ID" value="AAZ66314.1"/>
    <property type="molecule type" value="mRNA"/>
</dbReference>
<dbReference type="RefSeq" id="NP_001285565.1">
    <property type="nucleotide sequence ID" value="NM_001298636.1"/>
</dbReference>
<dbReference type="RefSeq" id="NP_722725.1">
    <property type="nucleotide sequence ID" value="NM_164435.3"/>
</dbReference>
<dbReference type="SMR" id="Q8IPX7"/>
<dbReference type="ComplexPortal" id="CPX-2595">
    <property type="entry name" value="Nuclear exosome"/>
</dbReference>
<dbReference type="ComplexPortal" id="CPX-2596">
    <property type="entry name" value="Cytoplasmic exosome"/>
</dbReference>
<dbReference type="FunCoup" id="Q8IPX7">
    <property type="interactions" value="1300"/>
</dbReference>
<dbReference type="IntAct" id="Q8IPX7">
    <property type="interactions" value="112"/>
</dbReference>
<dbReference type="STRING" id="7227.FBpp0311555"/>
<dbReference type="PaxDb" id="7227-FBpp0077551"/>
<dbReference type="DNASU" id="319033"/>
<dbReference type="EnsemblMetazoa" id="FBtr0077883">
    <property type="protein sequence ID" value="FBpp0077551"/>
    <property type="gene ID" value="FBgn0260648"/>
</dbReference>
<dbReference type="EnsemblMetazoa" id="FBtr0345430">
    <property type="protein sequence ID" value="FBpp0311555"/>
    <property type="gene ID" value="FBgn0260648"/>
</dbReference>
<dbReference type="GeneID" id="319033"/>
<dbReference type="KEGG" id="dme:Dmel_CG31938"/>
<dbReference type="UCSC" id="CG31938-RA">
    <property type="organism name" value="d. melanogaster"/>
</dbReference>
<dbReference type="AGR" id="FB:FBgn0260648"/>
<dbReference type="CTD" id="319033"/>
<dbReference type="FlyBase" id="FBgn0260648">
    <property type="gene designation" value="Rrp40"/>
</dbReference>
<dbReference type="VEuPathDB" id="VectorBase:FBgn0260648"/>
<dbReference type="eggNOG" id="KOG1004">
    <property type="taxonomic scope" value="Eukaryota"/>
</dbReference>
<dbReference type="GeneTree" id="ENSGT00940000153596"/>
<dbReference type="HOGENOM" id="CLU_069847_5_1_1"/>
<dbReference type="InParanoid" id="Q8IPX7"/>
<dbReference type="OMA" id="SYMAFPN"/>
<dbReference type="OrthoDB" id="340500at2759"/>
<dbReference type="PhylomeDB" id="Q8IPX7"/>
<dbReference type="Reactome" id="R-DME-429958">
    <property type="pathway name" value="mRNA decay by 3' to 5' exoribonuclease"/>
</dbReference>
<dbReference type="Reactome" id="R-DME-6791226">
    <property type="pathway name" value="Major pathway of rRNA processing in the nucleolus and cytosol"/>
</dbReference>
<dbReference type="SignaLink" id="Q8IPX7"/>
<dbReference type="BioGRID-ORCS" id="319033">
    <property type="hits" value="0 hits in 1 CRISPR screen"/>
</dbReference>
<dbReference type="GenomeRNAi" id="319033"/>
<dbReference type="PRO" id="PR:Q8IPX7"/>
<dbReference type="Proteomes" id="UP000000803">
    <property type="component" value="Chromosome 2L"/>
</dbReference>
<dbReference type="Bgee" id="FBgn0260648">
    <property type="expression patterns" value="Expressed in spermatocyte in testis and 49 other cell types or tissues"/>
</dbReference>
<dbReference type="GO" id="GO:0005737">
    <property type="term" value="C:cytoplasm"/>
    <property type="evidence" value="ECO:0000314"/>
    <property type="project" value="FlyBase"/>
</dbReference>
<dbReference type="GO" id="GO:0000177">
    <property type="term" value="C:cytoplasmic exosome (RNase complex)"/>
    <property type="evidence" value="ECO:0000318"/>
    <property type="project" value="GO_Central"/>
</dbReference>
<dbReference type="GO" id="GO:0000178">
    <property type="term" value="C:exosome (RNase complex)"/>
    <property type="evidence" value="ECO:0000314"/>
    <property type="project" value="FlyBase"/>
</dbReference>
<dbReference type="GO" id="GO:0000176">
    <property type="term" value="C:nuclear exosome (RNase complex)"/>
    <property type="evidence" value="ECO:0000314"/>
    <property type="project" value="FlyBase"/>
</dbReference>
<dbReference type="GO" id="GO:0005730">
    <property type="term" value="C:nucleolus"/>
    <property type="evidence" value="ECO:0007669"/>
    <property type="project" value="UniProtKB-SubCell"/>
</dbReference>
<dbReference type="GO" id="GO:0003723">
    <property type="term" value="F:RNA binding"/>
    <property type="evidence" value="ECO:0000318"/>
    <property type="project" value="GO_Central"/>
</dbReference>
<dbReference type="GO" id="GO:0007420">
    <property type="term" value="P:brain development"/>
    <property type="evidence" value="ECO:0000315"/>
    <property type="project" value="UniProtKB"/>
</dbReference>
<dbReference type="GO" id="GO:0071034">
    <property type="term" value="P:CUT catabolic process"/>
    <property type="evidence" value="ECO:0000318"/>
    <property type="project" value="GO_Central"/>
</dbReference>
<dbReference type="GO" id="GO:0000467">
    <property type="term" value="P:exonucleolytic trimming to generate mature 3'-end of 5.8S rRNA from tricistronic rRNA transcript (SSU-rRNA, 5.8S rRNA, LSU-rRNA)"/>
    <property type="evidence" value="ECO:0000318"/>
    <property type="project" value="GO_Central"/>
</dbReference>
<dbReference type="GO" id="GO:0035167">
    <property type="term" value="P:larval lymph gland hemopoiesis"/>
    <property type="evidence" value="ECO:0000315"/>
    <property type="project" value="FlyBase"/>
</dbReference>
<dbReference type="GO" id="GO:0016319">
    <property type="term" value="P:mushroom body development"/>
    <property type="evidence" value="ECO:0000315"/>
    <property type="project" value="UniProtKB"/>
</dbReference>
<dbReference type="GO" id="GO:0071035">
    <property type="term" value="P:nuclear polyadenylation-dependent rRNA catabolic process"/>
    <property type="evidence" value="ECO:0000318"/>
    <property type="project" value="GO_Central"/>
</dbReference>
<dbReference type="GO" id="GO:0000956">
    <property type="term" value="P:nuclear-transcribed mRNA catabolic process"/>
    <property type="evidence" value="ECO:0000318"/>
    <property type="project" value="GO_Central"/>
</dbReference>
<dbReference type="GO" id="GO:0071051">
    <property type="term" value="P:poly(A)-dependent snoRNA 3'-end processing"/>
    <property type="evidence" value="ECO:0000318"/>
    <property type="project" value="GO_Central"/>
</dbReference>
<dbReference type="GO" id="GO:0045995">
    <property type="term" value="P:regulation of embryonic development"/>
    <property type="evidence" value="ECO:0000315"/>
    <property type="project" value="UniProtKB"/>
</dbReference>
<dbReference type="GO" id="GO:0010468">
    <property type="term" value="P:regulation of gene expression"/>
    <property type="evidence" value="ECO:0000315"/>
    <property type="project" value="FlyBase"/>
</dbReference>
<dbReference type="GO" id="GO:0071038">
    <property type="term" value="P:TRAMP-dependent tRNA surveillance pathway"/>
    <property type="evidence" value="ECO:0000318"/>
    <property type="project" value="GO_Central"/>
</dbReference>
<dbReference type="GO" id="GO:0034475">
    <property type="term" value="P:U4 snRNA 3'-end processing"/>
    <property type="evidence" value="ECO:0000318"/>
    <property type="project" value="GO_Central"/>
</dbReference>
<dbReference type="CDD" id="cd22526">
    <property type="entry name" value="KH-I_Rrp40"/>
    <property type="match status" value="1"/>
</dbReference>
<dbReference type="CDD" id="cd05790">
    <property type="entry name" value="S1_Rrp40"/>
    <property type="match status" value="1"/>
</dbReference>
<dbReference type="FunFam" id="2.40.50.140:FF:000112">
    <property type="entry name" value="Exosome complex component RRP40"/>
    <property type="match status" value="1"/>
</dbReference>
<dbReference type="FunFam" id="3.30.1370.10:FF:000038">
    <property type="entry name" value="exosome complex component RRP40"/>
    <property type="match status" value="1"/>
</dbReference>
<dbReference type="FunFam" id="2.40.50.100:FF:000101">
    <property type="entry name" value="Exosome component 3"/>
    <property type="match status" value="1"/>
</dbReference>
<dbReference type="Gene3D" id="2.40.50.100">
    <property type="match status" value="1"/>
</dbReference>
<dbReference type="Gene3D" id="3.30.1370.10">
    <property type="entry name" value="K Homology domain, type 1"/>
    <property type="match status" value="1"/>
</dbReference>
<dbReference type="Gene3D" id="2.40.50.140">
    <property type="entry name" value="Nucleic acid-binding proteins"/>
    <property type="match status" value="1"/>
</dbReference>
<dbReference type="InterPro" id="IPR026699">
    <property type="entry name" value="Exosome_RNA_bind1/RRP40/RRP4"/>
</dbReference>
<dbReference type="InterPro" id="IPR004088">
    <property type="entry name" value="KH_dom_type_1"/>
</dbReference>
<dbReference type="InterPro" id="IPR036612">
    <property type="entry name" value="KH_dom_type_1_sf"/>
</dbReference>
<dbReference type="InterPro" id="IPR012340">
    <property type="entry name" value="NA-bd_OB-fold"/>
</dbReference>
<dbReference type="InterPro" id="IPR049469">
    <property type="entry name" value="RRP40_KH-I"/>
</dbReference>
<dbReference type="InterPro" id="IPR041054">
    <property type="entry name" value="Rrp40_N_euk"/>
</dbReference>
<dbReference type="InterPro" id="IPR037319">
    <property type="entry name" value="Rrp40_S1"/>
</dbReference>
<dbReference type="PANTHER" id="PTHR21321:SF1">
    <property type="entry name" value="EXOSOME COMPLEX COMPONENT RRP40"/>
    <property type="match status" value="1"/>
</dbReference>
<dbReference type="PANTHER" id="PTHR21321">
    <property type="entry name" value="PNAS-3 RELATED"/>
    <property type="match status" value="1"/>
</dbReference>
<dbReference type="Pfam" id="PF15985">
    <property type="entry name" value="KH_6"/>
    <property type="match status" value="1"/>
</dbReference>
<dbReference type="Pfam" id="PF18311">
    <property type="entry name" value="Rrp40_N"/>
    <property type="match status" value="1"/>
</dbReference>
<dbReference type="Pfam" id="PF21262">
    <property type="entry name" value="RRP40_S1"/>
    <property type="match status" value="1"/>
</dbReference>
<dbReference type="SUPFAM" id="SSF54791">
    <property type="entry name" value="Eukaryotic type KH-domain (KH-domain type I)"/>
    <property type="match status" value="1"/>
</dbReference>
<dbReference type="SUPFAM" id="SSF50249">
    <property type="entry name" value="Nucleic acid-binding proteins"/>
    <property type="match status" value="1"/>
</dbReference>
<dbReference type="SUPFAM" id="SSF110324">
    <property type="entry name" value="Ribosomal L27 protein-like"/>
    <property type="match status" value="1"/>
</dbReference>
<proteinExistence type="evidence at protein level"/>
<protein>
    <recommendedName>
        <fullName evidence="5">Exosome complex component RRP40</fullName>
    </recommendedName>
    <alternativeName>
        <fullName evidence="8">Ribosomal RNA-processing protein 40</fullName>
    </alternativeName>
</protein>
<comment type="function">
    <text evidence="1 4">Non-catalytic component of the RNA exosome complex which has 3'-&gt;5' exoribonuclease activity and participates in a multitude of cellular RNA processing and degradation events (By similarity). In the nucleus, the RNA exosome complex is involved in proper maturation of stable RNA species such as rRNA, snRNA and snoRNA, in the elimination of RNA processing by-products and non-coding 'pervasive' transcripts such as antisense RNA species, and of mRNAs with processing defects, thereby limiting or excluding their export to the cytoplasm (By similarity). In the cytoplasm, the RNA exosome complex is involved in general mRNA turnover and specifically degrades inherently unstable mRNAs containing AU-rich elements (AREs) within their 3' untranslated regions, and in RNA surveillance pathways, preventing translation of aberrant mRNAs (By similarity). The catalytic inactive RNA exosome core complex of 9 subunits is proposed to play a pivotal role in the binding and presentation of RNA for ribonucleolysis, and to serve as a scaffold for the association with catalytic subunits and accessory proteins or complexes (By similarity). Required generally for normal embryonic and neuronal development (PubMed:32645003). Also plays a critical role in the maintenance of neuronal function in mature flies by controlling the levels of specific mRNAs such as the synaptic regulator Arc1 (PubMed:32645003).</text>
</comment>
<comment type="subunit">
    <text evidence="1 2">Component of the RNA exosome complex (PubMed:12490954). Specifically part of the catalytically inactive RNA exosome core complex (By similarity).</text>
</comment>
<comment type="interaction">
    <interactant intactId="EBI-106288">
        <id>Q8IPX7</id>
    </interactant>
    <interactant intactId="EBI-166198">
        <id>Q9VGZ2</id>
        <label>Rrp46</label>
    </interactant>
    <organismsDiffer>false</organismsDiffer>
    <experiments>5</experiments>
</comment>
<comment type="subcellular location">
    <subcellularLocation>
        <location evidence="1">Cytoplasm</location>
    </subcellularLocation>
    <subcellularLocation>
        <location evidence="1">Nucleus</location>
        <location evidence="1">Nucleolus</location>
    </subcellularLocation>
    <subcellularLocation>
        <location evidence="2">Nucleus</location>
    </subcellularLocation>
</comment>
<comment type="disruption phenotype">
    <text evidence="3 4">RNAi-mediated knockdown in the whole body, neurons, glia or muscles is lethal (PubMed:32645003). RNAi-mediated knockdown in mushroom bodies affects the morphology of the alpha- and beta-lobes as well as ellipsoid bodies (PubMed:32645003). RNAi-mediated knockdown in the wing pouch results in severe wing development phenotypes and increase of miR-252-5p expression (PubMed:25892215).</text>
</comment>
<comment type="similarity">
    <text evidence="6">Belongs to the RRP40 family.</text>
</comment>
<organism evidence="9">
    <name type="scientific">Drosophila melanogaster</name>
    <name type="common">Fruit fly</name>
    <dbReference type="NCBI Taxonomy" id="7227"/>
    <lineage>
        <taxon>Eukaryota</taxon>
        <taxon>Metazoa</taxon>
        <taxon>Ecdysozoa</taxon>
        <taxon>Arthropoda</taxon>
        <taxon>Hexapoda</taxon>
        <taxon>Insecta</taxon>
        <taxon>Pterygota</taxon>
        <taxon>Neoptera</taxon>
        <taxon>Endopterygota</taxon>
        <taxon>Diptera</taxon>
        <taxon>Brachycera</taxon>
        <taxon>Muscomorpha</taxon>
        <taxon>Ephydroidea</taxon>
        <taxon>Drosophilidae</taxon>
        <taxon>Drosophila</taxon>
        <taxon>Sophophora</taxon>
    </lineage>
</organism>
<keyword id="KW-0963">Cytoplasm</keyword>
<keyword id="KW-0271">Exosome</keyword>
<keyword id="KW-0539">Nucleus</keyword>
<keyword id="KW-1185">Reference proteome</keyword>
<keyword id="KW-0694">RNA-binding</keyword>
<keyword id="KW-0698">rRNA processing</keyword>
<sequence>MSATSTIVMPGERIAAIEELAKSKRVILGPGLRRLDDTVVASKAGPLRHKEPGTFWVDNYQRRYIPARGDLILGIVRAKAGDLYRVDIGATDTASISYLAFEAASKKNRPDLIPGDLIYARVLNASADIEPELVCVNSVGKSGKLGVLTDGFFFKCSLNLGRMLLRENCPVLAALTRELPYEIAVGVNGRIWLKAHSLKETVALANAISALEQSGCAEIDKICGNLGDFLQA</sequence>
<feature type="chain" id="PRO_0000451458" description="Exosome complex component RRP40">
    <location>
        <begin position="1"/>
        <end position="232"/>
    </location>
</feature>
<feature type="mutagenesis site" description="Results in reduced viability, shortened lifespan, age-dependent wing posture and locomotor defects. Shows a mushroom body beta-lobe midline-crossing defect. Results in increased steady-state levels of specific neuronal mRNAs such as Arc1 and wfs1." evidence="4">
    <original>G</original>
    <variation>A</variation>
    <location>
        <position position="11"/>
    </location>
</feature>
<feature type="mutagenesis site" description="Results in reduced viability, shortened lifespan, age-dependent wing posture and locomotor defects. Results in increased steady-state levels of specific neuronal mRNAs such as Arc1 and wfs1." evidence="4">
    <original>D</original>
    <variation>A</variation>
    <location>
        <position position="87"/>
    </location>
</feature>
<evidence type="ECO:0000250" key="1">
    <source>
        <dbReference type="UniProtKB" id="Q9NQT5"/>
    </source>
</evidence>
<evidence type="ECO:0000269" key="2">
    <source>
    </source>
</evidence>
<evidence type="ECO:0000269" key="3">
    <source>
    </source>
</evidence>
<evidence type="ECO:0000269" key="4">
    <source>
    </source>
</evidence>
<evidence type="ECO:0000303" key="5">
    <source>
    </source>
</evidence>
<evidence type="ECO:0000305" key="6"/>
<evidence type="ECO:0000312" key="7">
    <source>
        <dbReference type="EMBL" id="AAZ66314.1"/>
    </source>
</evidence>
<evidence type="ECO:0000312" key="8">
    <source>
        <dbReference type="FlyBase" id="FBgn0260648"/>
    </source>
</evidence>
<evidence type="ECO:0000312" key="9">
    <source>
        <dbReference type="Proteomes" id="UP000000803"/>
    </source>
</evidence>